<proteinExistence type="inferred from homology"/>
<feature type="chain" id="PRO_0000178855" description="UDP-N-acetylglucosamine 1-carboxyvinyltransferase">
    <location>
        <begin position="1"/>
        <end position="416"/>
    </location>
</feature>
<feature type="active site" description="Proton donor" evidence="1">
    <location>
        <position position="116"/>
    </location>
</feature>
<feature type="binding site" evidence="1">
    <location>
        <begin position="22"/>
        <end position="23"/>
    </location>
    <ligand>
        <name>phosphoenolpyruvate</name>
        <dbReference type="ChEBI" id="CHEBI:58702"/>
    </ligand>
</feature>
<feature type="binding site" evidence="1">
    <location>
        <position position="92"/>
    </location>
    <ligand>
        <name>UDP-N-acetyl-alpha-D-glucosamine</name>
        <dbReference type="ChEBI" id="CHEBI:57705"/>
    </ligand>
</feature>
<feature type="binding site" evidence="1">
    <location>
        <position position="306"/>
    </location>
    <ligand>
        <name>UDP-N-acetyl-alpha-D-glucosamine</name>
        <dbReference type="ChEBI" id="CHEBI:57705"/>
    </ligand>
</feature>
<feature type="binding site" evidence="1">
    <location>
        <position position="328"/>
    </location>
    <ligand>
        <name>UDP-N-acetyl-alpha-D-glucosamine</name>
        <dbReference type="ChEBI" id="CHEBI:57705"/>
    </ligand>
</feature>
<feature type="modified residue" description="2-(S-cysteinyl)pyruvic acid O-phosphothioketal" evidence="1">
    <location>
        <position position="116"/>
    </location>
</feature>
<accession>Q89AE9</accession>
<protein>
    <recommendedName>
        <fullName evidence="1">UDP-N-acetylglucosamine 1-carboxyvinyltransferase</fullName>
        <ecNumber evidence="1">2.5.1.7</ecNumber>
    </recommendedName>
    <alternativeName>
        <fullName evidence="1">Enoylpyruvate transferase</fullName>
    </alternativeName>
    <alternativeName>
        <fullName evidence="1">UDP-N-acetylglucosamine enolpyruvyl transferase</fullName>
        <shortName evidence="1">EPT</shortName>
    </alternativeName>
</protein>
<organism>
    <name type="scientific">Buchnera aphidicola subsp. Baizongia pistaciae (strain Bp)</name>
    <dbReference type="NCBI Taxonomy" id="224915"/>
    <lineage>
        <taxon>Bacteria</taxon>
        <taxon>Pseudomonadati</taxon>
        <taxon>Pseudomonadota</taxon>
        <taxon>Gammaproteobacteria</taxon>
        <taxon>Enterobacterales</taxon>
        <taxon>Erwiniaceae</taxon>
        <taxon>Buchnera</taxon>
    </lineage>
</organism>
<sequence length="416" mass="44890">MNRFHISGPKNLSGEIKISGSKNAALPILLTSLLISEPIKLKNVPKLTDIMYAIKILTKLGVKIKVEKKVLYIDAKTIAICTIPDYLTKKTRASIWILGPLLARFGQAKISLPGGCKIGKRKIDLHLSGLKKLGANIAIKNNYIIGSVITKLIGNTIVLPIASVGATITIMSAATIATGITIINNAAREPEIIDVANFLNKLGAKIIGAGSKNIFITGVLKLHGGSYTIMPDRIETGTFLVAAAISNGSIICHNTKPNVLINLTKKLCETGAQIKTGTNWISLNMKGIYSKAINIKTAPYPGFPTDMQAIFSLLNLVSHGNSIVTETIFENRFSYVSELKKMGAKAQIKNNSLFCYGVKKLYSATVFASDLRSCASLILAGCIADGTTIVKNIHYIKRGYERFQEKLQSIGAKICN</sequence>
<evidence type="ECO:0000255" key="1">
    <source>
        <dbReference type="HAMAP-Rule" id="MF_00111"/>
    </source>
</evidence>
<name>MURA_BUCBP</name>
<dbReference type="EC" id="2.5.1.7" evidence="1"/>
<dbReference type="EMBL" id="AE016826">
    <property type="protein sequence ID" value="AAO27068.1"/>
    <property type="molecule type" value="Genomic_DNA"/>
</dbReference>
<dbReference type="RefSeq" id="WP_011091469.1">
    <property type="nucleotide sequence ID" value="NC_004545.1"/>
</dbReference>
<dbReference type="SMR" id="Q89AE9"/>
<dbReference type="STRING" id="224915.bbp_349"/>
<dbReference type="KEGG" id="bab:bbp_349"/>
<dbReference type="eggNOG" id="COG0766">
    <property type="taxonomic scope" value="Bacteria"/>
</dbReference>
<dbReference type="HOGENOM" id="CLU_027387_0_0_6"/>
<dbReference type="OrthoDB" id="9803760at2"/>
<dbReference type="UniPathway" id="UPA00219"/>
<dbReference type="Proteomes" id="UP000000601">
    <property type="component" value="Chromosome"/>
</dbReference>
<dbReference type="GO" id="GO:0005737">
    <property type="term" value="C:cytoplasm"/>
    <property type="evidence" value="ECO:0007669"/>
    <property type="project" value="UniProtKB-SubCell"/>
</dbReference>
<dbReference type="GO" id="GO:0008760">
    <property type="term" value="F:UDP-N-acetylglucosamine 1-carboxyvinyltransferase activity"/>
    <property type="evidence" value="ECO:0007669"/>
    <property type="project" value="UniProtKB-UniRule"/>
</dbReference>
<dbReference type="GO" id="GO:0051301">
    <property type="term" value="P:cell division"/>
    <property type="evidence" value="ECO:0007669"/>
    <property type="project" value="UniProtKB-KW"/>
</dbReference>
<dbReference type="GO" id="GO:0071555">
    <property type="term" value="P:cell wall organization"/>
    <property type="evidence" value="ECO:0007669"/>
    <property type="project" value="UniProtKB-KW"/>
</dbReference>
<dbReference type="GO" id="GO:0009252">
    <property type="term" value="P:peptidoglycan biosynthetic process"/>
    <property type="evidence" value="ECO:0007669"/>
    <property type="project" value="UniProtKB-UniRule"/>
</dbReference>
<dbReference type="GO" id="GO:0008360">
    <property type="term" value="P:regulation of cell shape"/>
    <property type="evidence" value="ECO:0007669"/>
    <property type="project" value="UniProtKB-KW"/>
</dbReference>
<dbReference type="GO" id="GO:0019277">
    <property type="term" value="P:UDP-N-acetylgalactosamine biosynthetic process"/>
    <property type="evidence" value="ECO:0007669"/>
    <property type="project" value="InterPro"/>
</dbReference>
<dbReference type="CDD" id="cd01555">
    <property type="entry name" value="UdpNAET"/>
    <property type="match status" value="1"/>
</dbReference>
<dbReference type="FunFam" id="3.65.10.10:FF:000001">
    <property type="entry name" value="UDP-N-acetylglucosamine 1-carboxyvinyltransferase"/>
    <property type="match status" value="1"/>
</dbReference>
<dbReference type="Gene3D" id="3.65.10.10">
    <property type="entry name" value="Enolpyruvate transferase domain"/>
    <property type="match status" value="2"/>
</dbReference>
<dbReference type="HAMAP" id="MF_00111">
    <property type="entry name" value="MurA"/>
    <property type="match status" value="1"/>
</dbReference>
<dbReference type="InterPro" id="IPR001986">
    <property type="entry name" value="Enolpyruvate_Tfrase_dom"/>
</dbReference>
<dbReference type="InterPro" id="IPR036968">
    <property type="entry name" value="Enolpyruvate_Tfrase_sf"/>
</dbReference>
<dbReference type="InterPro" id="IPR050068">
    <property type="entry name" value="MurA_subfamily"/>
</dbReference>
<dbReference type="InterPro" id="IPR013792">
    <property type="entry name" value="RNA3'P_cycl/enolpyr_Trfase_a/b"/>
</dbReference>
<dbReference type="InterPro" id="IPR005750">
    <property type="entry name" value="UDP_GlcNAc_COvinyl_MurA"/>
</dbReference>
<dbReference type="NCBIfam" id="TIGR01072">
    <property type="entry name" value="murA"/>
    <property type="match status" value="1"/>
</dbReference>
<dbReference type="NCBIfam" id="NF006873">
    <property type="entry name" value="PRK09369.1"/>
    <property type="match status" value="1"/>
</dbReference>
<dbReference type="PANTHER" id="PTHR43783">
    <property type="entry name" value="UDP-N-ACETYLGLUCOSAMINE 1-CARBOXYVINYLTRANSFERASE"/>
    <property type="match status" value="1"/>
</dbReference>
<dbReference type="PANTHER" id="PTHR43783:SF1">
    <property type="entry name" value="UDP-N-ACETYLGLUCOSAMINE 1-CARBOXYVINYLTRANSFERASE"/>
    <property type="match status" value="1"/>
</dbReference>
<dbReference type="Pfam" id="PF00275">
    <property type="entry name" value="EPSP_synthase"/>
    <property type="match status" value="1"/>
</dbReference>
<dbReference type="SUPFAM" id="SSF55205">
    <property type="entry name" value="EPT/RTPC-like"/>
    <property type="match status" value="1"/>
</dbReference>
<keyword id="KW-0131">Cell cycle</keyword>
<keyword id="KW-0132">Cell division</keyword>
<keyword id="KW-0133">Cell shape</keyword>
<keyword id="KW-0961">Cell wall biogenesis/degradation</keyword>
<keyword id="KW-0963">Cytoplasm</keyword>
<keyword id="KW-0573">Peptidoglycan synthesis</keyword>
<keyword id="KW-0670">Pyruvate</keyword>
<keyword id="KW-1185">Reference proteome</keyword>
<keyword id="KW-0808">Transferase</keyword>
<reference key="1">
    <citation type="journal article" date="2003" name="Proc. Natl. Acad. Sci. U.S.A.">
        <title>Reductive genome evolution in Buchnera aphidicola.</title>
        <authorList>
            <person name="van Ham R.C.H.J."/>
            <person name="Kamerbeek J."/>
            <person name="Palacios C."/>
            <person name="Rausell C."/>
            <person name="Abascal F."/>
            <person name="Bastolla U."/>
            <person name="Fernandez J.M."/>
            <person name="Jimenez L."/>
            <person name="Postigo M."/>
            <person name="Silva F.J."/>
            <person name="Tamames J."/>
            <person name="Viguera E."/>
            <person name="Latorre A."/>
            <person name="Valencia A."/>
            <person name="Moran F."/>
            <person name="Moya A."/>
        </authorList>
    </citation>
    <scope>NUCLEOTIDE SEQUENCE [LARGE SCALE GENOMIC DNA]</scope>
    <source>
        <strain>Bp</strain>
    </source>
</reference>
<comment type="function">
    <text evidence="1">Cell wall formation. Adds enolpyruvyl to UDP-N-acetylglucosamine.</text>
</comment>
<comment type="catalytic activity">
    <reaction evidence="1">
        <text>phosphoenolpyruvate + UDP-N-acetyl-alpha-D-glucosamine = UDP-N-acetyl-3-O-(1-carboxyvinyl)-alpha-D-glucosamine + phosphate</text>
        <dbReference type="Rhea" id="RHEA:18681"/>
        <dbReference type="ChEBI" id="CHEBI:43474"/>
        <dbReference type="ChEBI" id="CHEBI:57705"/>
        <dbReference type="ChEBI" id="CHEBI:58702"/>
        <dbReference type="ChEBI" id="CHEBI:68483"/>
        <dbReference type="EC" id="2.5.1.7"/>
    </reaction>
</comment>
<comment type="pathway">
    <text evidence="1">Cell wall biogenesis; peptidoglycan biosynthesis.</text>
</comment>
<comment type="subcellular location">
    <subcellularLocation>
        <location evidence="1">Cytoplasm</location>
    </subcellularLocation>
</comment>
<comment type="similarity">
    <text evidence="1">Belongs to the EPSP synthase family. MurA subfamily.</text>
</comment>
<gene>
    <name evidence="1" type="primary">murA</name>
    <name type="ordered locus">bbp_349</name>
</gene>